<reference key="1">
    <citation type="submission" date="1999-01" db="EMBL/GenBank/DDBJ databases">
        <title>Rat adenylate kinase isozyme 1.</title>
        <authorList>
            <person name="Noma T."/>
        </authorList>
    </citation>
    <scope>NUCLEOTIDE SEQUENCE [MRNA]</scope>
    <source>
        <tissue>Brain</tissue>
    </source>
</reference>
<reference key="2">
    <citation type="journal article" date="2004" name="Genome Res.">
        <title>The status, quality, and expansion of the NIH full-length cDNA project: the Mammalian Gene Collection (MGC).</title>
        <authorList>
            <consortium name="The MGC Project Team"/>
        </authorList>
    </citation>
    <scope>NUCLEOTIDE SEQUENCE [LARGE SCALE MRNA]</scope>
    <source>
        <tissue>Kidney</tissue>
    </source>
</reference>
<reference key="3">
    <citation type="submission" date="2007-07" db="UniProtKB">
        <authorList>
            <person name="Lubec G."/>
            <person name="Afjehi-Sadat L."/>
            <person name="Diao W."/>
            <person name="Kang S.U."/>
        </authorList>
    </citation>
    <scope>PROTEIN SEQUENCE OF 10-21; 32-44; 64-77; 84-97; 101-128; 156-167 AND 172-194</scope>
    <scope>IDENTIFICATION BY MASS SPECTROMETRY</scope>
    <source>
        <strain>Sprague-Dawley</strain>
        <tissue>Brain</tissue>
        <tissue>Hippocampus</tissue>
        <tissue>Spinal cord</tissue>
    </source>
</reference>
<reference key="4">
    <citation type="journal article" date="1993" name="J. Biochem.">
        <title>Tissue-specific and developmentally regulated expression of the genes encoding adenylate kinase isozymes.</title>
        <authorList>
            <person name="Tanabe T."/>
            <person name="Yamada M."/>
            <person name="Noma T."/>
            <person name="Kajii T."/>
            <person name="Nakazawa A."/>
        </authorList>
    </citation>
    <scope>NUCLEOTIDE SEQUENCE [MRNA] OF 72-194</scope>
</reference>
<reference key="5">
    <citation type="journal article" date="2012" name="Nat. Commun.">
        <title>Quantitative maps of protein phosphorylation sites across 14 different rat organs and tissues.</title>
        <authorList>
            <person name="Lundby A."/>
            <person name="Secher A."/>
            <person name="Lage K."/>
            <person name="Nordsborg N.B."/>
            <person name="Dmytriyev A."/>
            <person name="Lundby C."/>
            <person name="Olsen J.V."/>
        </authorList>
    </citation>
    <scope>IDENTIFICATION BY MASS SPECTROMETRY [LARGE SCALE ANALYSIS]</scope>
</reference>
<feature type="chain" id="PRO_0000158914" description="Adenylate kinase isoenzyme 1">
    <location>
        <begin position="1"/>
        <end position="194"/>
    </location>
</feature>
<feature type="region of interest" description="NMP" evidence="3">
    <location>
        <begin position="38"/>
        <end position="67"/>
    </location>
</feature>
<feature type="region of interest" description="LID" evidence="3">
    <location>
        <begin position="131"/>
        <end position="141"/>
    </location>
</feature>
<feature type="binding site" evidence="3">
    <location>
        <begin position="18"/>
        <end position="23"/>
    </location>
    <ligand>
        <name>ATP</name>
        <dbReference type="ChEBI" id="CHEBI:30616"/>
    </ligand>
</feature>
<feature type="binding site" evidence="3">
    <location>
        <position position="39"/>
    </location>
    <ligand>
        <name>AMP</name>
        <dbReference type="ChEBI" id="CHEBI:456215"/>
    </ligand>
</feature>
<feature type="binding site" evidence="3">
    <location>
        <position position="44"/>
    </location>
    <ligand>
        <name>AMP</name>
        <dbReference type="ChEBI" id="CHEBI:456215"/>
    </ligand>
</feature>
<feature type="binding site" evidence="3">
    <location>
        <begin position="65"/>
        <end position="67"/>
    </location>
    <ligand>
        <name>AMP</name>
        <dbReference type="ChEBI" id="CHEBI:456215"/>
    </ligand>
</feature>
<feature type="binding site" evidence="3">
    <location>
        <begin position="94"/>
        <end position="97"/>
    </location>
    <ligand>
        <name>AMP</name>
        <dbReference type="ChEBI" id="CHEBI:456215"/>
    </ligand>
</feature>
<feature type="binding site" evidence="3">
    <location>
        <position position="101"/>
    </location>
    <ligand>
        <name>AMP</name>
        <dbReference type="ChEBI" id="CHEBI:456215"/>
    </ligand>
</feature>
<feature type="binding site" evidence="3">
    <location>
        <position position="132"/>
    </location>
    <ligand>
        <name>ATP</name>
        <dbReference type="ChEBI" id="CHEBI:30616"/>
    </ligand>
</feature>
<feature type="binding site" evidence="3">
    <location>
        <position position="138"/>
    </location>
    <ligand>
        <name>AMP</name>
        <dbReference type="ChEBI" id="CHEBI:456215"/>
    </ligand>
</feature>
<feature type="binding site" evidence="3">
    <location>
        <position position="149"/>
    </location>
    <ligand>
        <name>AMP</name>
        <dbReference type="ChEBI" id="CHEBI:456215"/>
    </ligand>
</feature>
<feature type="binding site" evidence="3">
    <location>
        <position position="177"/>
    </location>
    <ligand>
        <name>ATP</name>
        <dbReference type="ChEBI" id="CHEBI:30616"/>
    </ligand>
</feature>
<feature type="modified residue" description="N-acetylmethionine" evidence="1 3">
    <location>
        <position position="1"/>
    </location>
</feature>
<feature type="modified residue" description="Phosphoserine" evidence="1">
    <location>
        <position position="38"/>
    </location>
</feature>
<feature type="sequence conflict" description="In Ref. 1; BAA97655." evidence="4" ref="1">
    <original>L</original>
    <variation>F</variation>
    <location>
        <position position="81"/>
    </location>
</feature>
<feature type="sequence conflict" description="In Ref. 4; BAA02643." evidence="4" ref="4">
    <original>E</original>
    <variation>S</variation>
    <location>
        <position position="104"/>
    </location>
</feature>
<feature type="sequence conflict" description="In Ref. 4; BAA02643." evidence="4" ref="4">
    <original>A</original>
    <variation>L</variation>
    <location>
        <position position="175"/>
    </location>
</feature>
<feature type="sequence conflict" description="In Ref. 4; BAA02643." evidence="4" ref="4">
    <original>V</original>
    <variation>W</variation>
    <location>
        <position position="179"/>
    </location>
</feature>
<feature type="sequence conflict" description="In Ref. 1; BAA97655 and 4; BAA02643." evidence="4" ref="1 4">
    <original>C</original>
    <variation>S</variation>
    <location>
        <position position="187"/>
    </location>
</feature>
<evidence type="ECO:0000250" key="1">
    <source>
        <dbReference type="UniProtKB" id="P00568"/>
    </source>
</evidence>
<evidence type="ECO:0000250" key="2">
    <source>
        <dbReference type="UniProtKB" id="P05081"/>
    </source>
</evidence>
<evidence type="ECO:0000255" key="3">
    <source>
        <dbReference type="HAMAP-Rule" id="MF_03171"/>
    </source>
</evidence>
<evidence type="ECO:0000305" key="4"/>
<protein>
    <recommendedName>
        <fullName evidence="3">Adenylate kinase isoenzyme 1</fullName>
        <shortName evidence="3">AK 1</shortName>
        <ecNumber evidence="1 3">2.7.4.3</ecNumber>
        <ecNumber evidence="1">2.7.4.4</ecNumber>
        <ecNumber evidence="1 3">2.7.4.6</ecNumber>
    </recommendedName>
    <alternativeName>
        <fullName evidence="3">ATP-AMP transphosphorylase 1</fullName>
    </alternativeName>
    <alternativeName>
        <fullName evidence="3">ATP:AMP phosphotransferase</fullName>
    </alternativeName>
    <alternativeName>
        <fullName evidence="3">Adenylate monophosphate kinase</fullName>
    </alternativeName>
    <alternativeName>
        <fullName evidence="3">Myokinase</fullName>
    </alternativeName>
</protein>
<organism>
    <name type="scientific">Rattus norvegicus</name>
    <name type="common">Rat</name>
    <dbReference type="NCBI Taxonomy" id="10116"/>
    <lineage>
        <taxon>Eukaryota</taxon>
        <taxon>Metazoa</taxon>
        <taxon>Chordata</taxon>
        <taxon>Craniata</taxon>
        <taxon>Vertebrata</taxon>
        <taxon>Euteleostomi</taxon>
        <taxon>Mammalia</taxon>
        <taxon>Eutheria</taxon>
        <taxon>Euarchontoglires</taxon>
        <taxon>Glires</taxon>
        <taxon>Rodentia</taxon>
        <taxon>Myomorpha</taxon>
        <taxon>Muroidea</taxon>
        <taxon>Muridae</taxon>
        <taxon>Murinae</taxon>
        <taxon>Rattus</taxon>
    </lineage>
</organism>
<sequence length="194" mass="21584">MEDKLKKAKIIFVVGGPGSGKGTQCEKIVQKYGYTHLSTGDLLRAEVSSGSSRGKMLSSIMEKGELVPLETVLDMLRDAMLAKVDSSNGFLIDGYPREVKQGEEFERKIAQPTLLLYVDAGPETMTQRLLKRGETSGRVDDNEETIKKRLETYYKATEPVISFYDKRGIVRKVNAEGSVDTVFSQVCTYLDSLK</sequence>
<keyword id="KW-0007">Acetylation</keyword>
<keyword id="KW-0067">ATP-binding</keyword>
<keyword id="KW-0963">Cytoplasm</keyword>
<keyword id="KW-0903">Direct protein sequencing</keyword>
<keyword id="KW-0418">Kinase</keyword>
<keyword id="KW-0547">Nucleotide-binding</keyword>
<keyword id="KW-0597">Phosphoprotein</keyword>
<keyword id="KW-1185">Reference proteome</keyword>
<keyword id="KW-0808">Transferase</keyword>
<dbReference type="EC" id="2.7.4.3" evidence="1 3"/>
<dbReference type="EC" id="2.7.4.4" evidence="1"/>
<dbReference type="EC" id="2.7.4.6" evidence="1 3"/>
<dbReference type="EMBL" id="AB022701">
    <property type="protein sequence ID" value="BAA97655.1"/>
    <property type="molecule type" value="mRNA"/>
</dbReference>
<dbReference type="EMBL" id="BC089797">
    <property type="protein sequence ID" value="AAH89797.1"/>
    <property type="molecule type" value="mRNA"/>
</dbReference>
<dbReference type="EMBL" id="D13376">
    <property type="protein sequence ID" value="BAA02643.1"/>
    <property type="molecule type" value="mRNA"/>
</dbReference>
<dbReference type="PIR" id="PQ0534">
    <property type="entry name" value="PQ0534"/>
</dbReference>
<dbReference type="RefSeq" id="NP_077325.2">
    <property type="nucleotide sequence ID" value="NM_024349.4"/>
</dbReference>
<dbReference type="RefSeq" id="XP_038960160.1">
    <property type="nucleotide sequence ID" value="XM_039104232.2"/>
</dbReference>
<dbReference type="RefSeq" id="XP_038960161.1">
    <property type="nucleotide sequence ID" value="XM_039104233.2"/>
</dbReference>
<dbReference type="RefSeq" id="XP_038960162.1">
    <property type="nucleotide sequence ID" value="XM_039104234.2"/>
</dbReference>
<dbReference type="RefSeq" id="XP_038960163.1">
    <property type="nucleotide sequence ID" value="XM_039104235.2"/>
</dbReference>
<dbReference type="RefSeq" id="XP_063139143.1">
    <property type="nucleotide sequence ID" value="XM_063283073.1"/>
</dbReference>
<dbReference type="SMR" id="P39069"/>
<dbReference type="BioGRID" id="246373">
    <property type="interactions" value="2"/>
</dbReference>
<dbReference type="FunCoup" id="P39069">
    <property type="interactions" value="487"/>
</dbReference>
<dbReference type="IntAct" id="P39069">
    <property type="interactions" value="5"/>
</dbReference>
<dbReference type="MINT" id="P39069"/>
<dbReference type="STRING" id="10116.ENSRNOP00000074303"/>
<dbReference type="BindingDB" id="P39069"/>
<dbReference type="ChEMBL" id="CHEMBL3773"/>
<dbReference type="iPTMnet" id="P39069"/>
<dbReference type="PhosphoSitePlus" id="P39069"/>
<dbReference type="SwissPalm" id="P39069"/>
<dbReference type="jPOST" id="P39069"/>
<dbReference type="Ensembl" id="ENSRNOT00000091048.2">
    <property type="protein sequence ID" value="ENSRNOP00000074303.2"/>
    <property type="gene ID" value="ENSRNOG00000049056.3"/>
</dbReference>
<dbReference type="GeneID" id="24183"/>
<dbReference type="KEGG" id="rno:24183"/>
<dbReference type="AGR" id="RGD:2076"/>
<dbReference type="CTD" id="203"/>
<dbReference type="RGD" id="2076">
    <property type="gene designation" value="Ak1"/>
</dbReference>
<dbReference type="GeneTree" id="ENSGT00940000158325"/>
<dbReference type="InParanoid" id="P39069"/>
<dbReference type="PhylomeDB" id="P39069"/>
<dbReference type="Reactome" id="R-RNO-499943">
    <property type="pathway name" value="Interconversion of nucleotide di- and triphosphates"/>
</dbReference>
<dbReference type="PRO" id="PR:P39069"/>
<dbReference type="Proteomes" id="UP000002494">
    <property type="component" value="Chromosome 3"/>
</dbReference>
<dbReference type="GO" id="GO:0005737">
    <property type="term" value="C:cytoplasm"/>
    <property type="evidence" value="ECO:0000318"/>
    <property type="project" value="GO_Central"/>
</dbReference>
<dbReference type="GO" id="GO:0005829">
    <property type="term" value="C:cytosol"/>
    <property type="evidence" value="ECO:0000318"/>
    <property type="project" value="GO_Central"/>
</dbReference>
<dbReference type="GO" id="GO:0001520">
    <property type="term" value="C:outer dense fiber"/>
    <property type="evidence" value="ECO:0000266"/>
    <property type="project" value="RGD"/>
</dbReference>
<dbReference type="GO" id="GO:0048471">
    <property type="term" value="C:perinuclear region of cytoplasm"/>
    <property type="evidence" value="ECO:0000314"/>
    <property type="project" value="RGD"/>
</dbReference>
<dbReference type="GO" id="GO:0030017">
    <property type="term" value="C:sarcomere"/>
    <property type="evidence" value="ECO:0000314"/>
    <property type="project" value="RGD"/>
</dbReference>
<dbReference type="GO" id="GO:0036126">
    <property type="term" value="C:sperm flagellum"/>
    <property type="evidence" value="ECO:0000266"/>
    <property type="project" value="RGD"/>
</dbReference>
<dbReference type="GO" id="GO:0004017">
    <property type="term" value="F:adenylate kinase activity"/>
    <property type="evidence" value="ECO:0000314"/>
    <property type="project" value="RGD"/>
</dbReference>
<dbReference type="GO" id="GO:0005524">
    <property type="term" value="F:ATP binding"/>
    <property type="evidence" value="ECO:0007669"/>
    <property type="project" value="UniProtKB-KW"/>
</dbReference>
<dbReference type="GO" id="GO:0047506">
    <property type="term" value="F:deoxyadenylate kinase activity"/>
    <property type="evidence" value="ECO:0007669"/>
    <property type="project" value="RHEA"/>
</dbReference>
<dbReference type="GO" id="GO:0004550">
    <property type="term" value="F:nucleoside diphosphate kinase activity"/>
    <property type="evidence" value="ECO:0000250"/>
    <property type="project" value="UniProtKB"/>
</dbReference>
<dbReference type="GO" id="GO:0046083">
    <property type="term" value="P:adenine metabolic process"/>
    <property type="evidence" value="ECO:0000303"/>
    <property type="project" value="RGD"/>
</dbReference>
<dbReference type="GO" id="GO:0006172">
    <property type="term" value="P:ADP biosynthetic process"/>
    <property type="evidence" value="ECO:0000314"/>
    <property type="project" value="RGD"/>
</dbReference>
<dbReference type="GO" id="GO:0046033">
    <property type="term" value="P:AMP metabolic process"/>
    <property type="evidence" value="ECO:0000314"/>
    <property type="project" value="RGD"/>
</dbReference>
<dbReference type="GO" id="GO:0046034">
    <property type="term" value="P:ATP metabolic process"/>
    <property type="evidence" value="ECO:0007669"/>
    <property type="project" value="UniProtKB-UniRule"/>
</dbReference>
<dbReference type="GO" id="GO:0021549">
    <property type="term" value="P:cerebellum development"/>
    <property type="evidence" value="ECO:0000270"/>
    <property type="project" value="RGD"/>
</dbReference>
<dbReference type="GO" id="GO:0046103">
    <property type="term" value="P:inosine biosynthetic process"/>
    <property type="evidence" value="ECO:0000314"/>
    <property type="project" value="RGD"/>
</dbReference>
<dbReference type="GO" id="GO:0007517">
    <property type="term" value="P:muscle organ development"/>
    <property type="evidence" value="ECO:0000270"/>
    <property type="project" value="RGD"/>
</dbReference>
<dbReference type="GO" id="GO:0030182">
    <property type="term" value="P:neuron differentiation"/>
    <property type="evidence" value="ECO:0000270"/>
    <property type="project" value="RGD"/>
</dbReference>
<dbReference type="GO" id="GO:0009142">
    <property type="term" value="P:nucleoside triphosphate biosynthetic process"/>
    <property type="evidence" value="ECO:0007669"/>
    <property type="project" value="InterPro"/>
</dbReference>
<dbReference type="GO" id="GO:0021772">
    <property type="term" value="P:olfactory bulb development"/>
    <property type="evidence" value="ECO:0000270"/>
    <property type="project" value="RGD"/>
</dbReference>
<dbReference type="GO" id="GO:0010828">
    <property type="term" value="P:positive regulation of D-glucose transmembrane transport"/>
    <property type="evidence" value="ECO:0000315"/>
    <property type="project" value="RGD"/>
</dbReference>
<dbReference type="GO" id="GO:0014042">
    <property type="term" value="P:positive regulation of neuron maturation"/>
    <property type="evidence" value="ECO:0000270"/>
    <property type="project" value="RGD"/>
</dbReference>
<dbReference type="GO" id="GO:0014823">
    <property type="term" value="P:response to activity"/>
    <property type="evidence" value="ECO:0000270"/>
    <property type="project" value="RGD"/>
</dbReference>
<dbReference type="GO" id="GO:0032355">
    <property type="term" value="P:response to estradiol"/>
    <property type="evidence" value="ECO:0000270"/>
    <property type="project" value="RGD"/>
</dbReference>
<dbReference type="GO" id="GO:0033574">
    <property type="term" value="P:response to testosterone"/>
    <property type="evidence" value="ECO:0000270"/>
    <property type="project" value="RGD"/>
</dbReference>
<dbReference type="GO" id="GO:0009410">
    <property type="term" value="P:response to xenobiotic stimulus"/>
    <property type="evidence" value="ECO:0000270"/>
    <property type="project" value="RGD"/>
</dbReference>
<dbReference type="CDD" id="cd01428">
    <property type="entry name" value="ADK"/>
    <property type="match status" value="1"/>
</dbReference>
<dbReference type="FunFam" id="3.40.50.300:FF:000315">
    <property type="entry name" value="Adenylate kinase 1"/>
    <property type="match status" value="1"/>
</dbReference>
<dbReference type="Gene3D" id="3.40.50.300">
    <property type="entry name" value="P-loop containing nucleotide triphosphate hydrolases"/>
    <property type="match status" value="1"/>
</dbReference>
<dbReference type="HAMAP" id="MF_00235">
    <property type="entry name" value="Adenylate_kinase_Adk"/>
    <property type="match status" value="1"/>
</dbReference>
<dbReference type="HAMAP" id="MF_03171">
    <property type="entry name" value="Adenylate_kinase_AK1"/>
    <property type="match status" value="1"/>
</dbReference>
<dbReference type="InterPro" id="IPR000850">
    <property type="entry name" value="Adenylat/UMP-CMP_kin"/>
</dbReference>
<dbReference type="InterPro" id="IPR033690">
    <property type="entry name" value="Adenylat_kinase_CS"/>
</dbReference>
<dbReference type="InterPro" id="IPR028582">
    <property type="entry name" value="AK1"/>
</dbReference>
<dbReference type="InterPro" id="IPR006267">
    <property type="entry name" value="AK1/5"/>
</dbReference>
<dbReference type="InterPro" id="IPR027417">
    <property type="entry name" value="P-loop_NTPase"/>
</dbReference>
<dbReference type="NCBIfam" id="TIGR01360">
    <property type="entry name" value="aden_kin_iso1"/>
    <property type="match status" value="1"/>
</dbReference>
<dbReference type="NCBIfam" id="NF011100">
    <property type="entry name" value="PRK14527.1"/>
    <property type="match status" value="1"/>
</dbReference>
<dbReference type="PANTHER" id="PTHR23359">
    <property type="entry name" value="NUCLEOTIDE KINASE"/>
    <property type="match status" value="1"/>
</dbReference>
<dbReference type="Pfam" id="PF00406">
    <property type="entry name" value="ADK"/>
    <property type="match status" value="1"/>
</dbReference>
<dbReference type="PRINTS" id="PR00094">
    <property type="entry name" value="ADENYLTKNASE"/>
</dbReference>
<dbReference type="SUPFAM" id="SSF52540">
    <property type="entry name" value="P-loop containing nucleoside triphosphate hydrolases"/>
    <property type="match status" value="1"/>
</dbReference>
<dbReference type="PROSITE" id="PS00113">
    <property type="entry name" value="ADENYLATE_KINASE"/>
    <property type="match status" value="1"/>
</dbReference>
<proteinExistence type="evidence at protein level"/>
<gene>
    <name type="primary">Ak1</name>
</gene>
<comment type="function">
    <text evidence="1 2 3">Catalyzes the reversible transfer of the terminal phosphate group between ATP and AMP. Also displays broad nucleoside diphosphate kinase activity. Plays an important role in cellular energy homeostasis and in adenine nucleotide metabolism (By similarity). Also catalyzes at a very low rate the synthesis of thiamine triphosphate (ThTP) from thiamine diphosphate (ThDP) and ADP (By similarity).</text>
</comment>
<comment type="catalytic activity">
    <reaction evidence="1">
        <text>a ribonucleoside 5'-phosphate + ATP = a ribonucleoside 5'-diphosphate + ADP</text>
        <dbReference type="Rhea" id="RHEA:24036"/>
        <dbReference type="ChEBI" id="CHEBI:30616"/>
        <dbReference type="ChEBI" id="CHEBI:57930"/>
        <dbReference type="ChEBI" id="CHEBI:58043"/>
        <dbReference type="ChEBI" id="CHEBI:456216"/>
        <dbReference type="EC" id="2.7.4.4"/>
    </reaction>
</comment>
<comment type="catalytic activity">
    <reaction evidence="1 3">
        <text>AMP + ATP = 2 ADP</text>
        <dbReference type="Rhea" id="RHEA:12973"/>
        <dbReference type="ChEBI" id="CHEBI:30616"/>
        <dbReference type="ChEBI" id="CHEBI:456215"/>
        <dbReference type="ChEBI" id="CHEBI:456216"/>
        <dbReference type="EC" id="2.7.4.3"/>
    </reaction>
</comment>
<comment type="catalytic activity">
    <reaction evidence="1">
        <text>dAMP + ATP = dADP + ADP</text>
        <dbReference type="Rhea" id="RHEA:23100"/>
        <dbReference type="ChEBI" id="CHEBI:30616"/>
        <dbReference type="ChEBI" id="CHEBI:57667"/>
        <dbReference type="ChEBI" id="CHEBI:58245"/>
        <dbReference type="ChEBI" id="CHEBI:456216"/>
    </reaction>
</comment>
<comment type="catalytic activity">
    <reaction evidence="2">
        <text>dATP + AMP = dADP + ADP</text>
        <dbReference type="Rhea" id="RHEA:79899"/>
        <dbReference type="ChEBI" id="CHEBI:57667"/>
        <dbReference type="ChEBI" id="CHEBI:61404"/>
        <dbReference type="ChEBI" id="CHEBI:456215"/>
        <dbReference type="ChEBI" id="CHEBI:456216"/>
    </reaction>
</comment>
<comment type="catalytic activity">
    <reaction evidence="2">
        <text>dAMP + dATP = 2 dADP</text>
        <dbReference type="Rhea" id="RHEA:78311"/>
        <dbReference type="ChEBI" id="CHEBI:57667"/>
        <dbReference type="ChEBI" id="CHEBI:58245"/>
        <dbReference type="ChEBI" id="CHEBI:61404"/>
    </reaction>
</comment>
<comment type="catalytic activity">
    <reaction evidence="1 3">
        <text>a 2'-deoxyribonucleoside 5'-diphosphate + ATP = a 2'-deoxyribonucleoside 5'-triphosphate + ADP</text>
        <dbReference type="Rhea" id="RHEA:44640"/>
        <dbReference type="ChEBI" id="CHEBI:30616"/>
        <dbReference type="ChEBI" id="CHEBI:61560"/>
        <dbReference type="ChEBI" id="CHEBI:73316"/>
        <dbReference type="ChEBI" id="CHEBI:456216"/>
        <dbReference type="EC" id="2.7.4.6"/>
    </reaction>
</comment>
<comment type="catalytic activity">
    <reaction evidence="1">
        <text>a ribonucleoside 5'-diphosphate + ATP = a ribonucleoside 5'-triphosphate + ADP</text>
        <dbReference type="Rhea" id="RHEA:18113"/>
        <dbReference type="ChEBI" id="CHEBI:30616"/>
        <dbReference type="ChEBI" id="CHEBI:57930"/>
        <dbReference type="ChEBI" id="CHEBI:61557"/>
        <dbReference type="ChEBI" id="CHEBI:456216"/>
        <dbReference type="EC" id="2.7.4.6"/>
    </reaction>
</comment>
<comment type="catalytic activity">
    <reaction evidence="1">
        <text>CDP + GTP = CTP + GDP</text>
        <dbReference type="Rhea" id="RHEA:79859"/>
        <dbReference type="ChEBI" id="CHEBI:37563"/>
        <dbReference type="ChEBI" id="CHEBI:37565"/>
        <dbReference type="ChEBI" id="CHEBI:58069"/>
        <dbReference type="ChEBI" id="CHEBI:58189"/>
    </reaction>
</comment>
<comment type="catalytic activity">
    <reaction evidence="1">
        <text>GDP + ATP = GTP + ADP</text>
        <dbReference type="Rhea" id="RHEA:27686"/>
        <dbReference type="ChEBI" id="CHEBI:30616"/>
        <dbReference type="ChEBI" id="CHEBI:37565"/>
        <dbReference type="ChEBI" id="CHEBI:58189"/>
        <dbReference type="ChEBI" id="CHEBI:456216"/>
        <dbReference type="EC" id="2.7.4.6"/>
    </reaction>
</comment>
<comment type="catalytic activity">
    <reaction evidence="1">
        <text>UDP + ATP = UTP + ADP</text>
        <dbReference type="Rhea" id="RHEA:25098"/>
        <dbReference type="ChEBI" id="CHEBI:30616"/>
        <dbReference type="ChEBI" id="CHEBI:46398"/>
        <dbReference type="ChEBI" id="CHEBI:58223"/>
        <dbReference type="ChEBI" id="CHEBI:456216"/>
        <dbReference type="EC" id="2.7.4.6"/>
    </reaction>
</comment>
<comment type="catalytic activity">
    <reaction evidence="1">
        <text>GTP + UDP = UTP + GDP</text>
        <dbReference type="Rhea" id="RHEA:79863"/>
        <dbReference type="ChEBI" id="CHEBI:37565"/>
        <dbReference type="ChEBI" id="CHEBI:46398"/>
        <dbReference type="ChEBI" id="CHEBI:58189"/>
        <dbReference type="ChEBI" id="CHEBI:58223"/>
    </reaction>
</comment>
<comment type="catalytic activity">
    <reaction evidence="1">
        <text>dTDP + GTP = dTTP + GDP</text>
        <dbReference type="Rhea" id="RHEA:79867"/>
        <dbReference type="ChEBI" id="CHEBI:37565"/>
        <dbReference type="ChEBI" id="CHEBI:37568"/>
        <dbReference type="ChEBI" id="CHEBI:58189"/>
        <dbReference type="ChEBI" id="CHEBI:58369"/>
    </reaction>
</comment>
<comment type="catalytic activity">
    <reaction evidence="1">
        <text>dCDP + GTP = dCTP + GDP</text>
        <dbReference type="Rhea" id="RHEA:79875"/>
        <dbReference type="ChEBI" id="CHEBI:37565"/>
        <dbReference type="ChEBI" id="CHEBI:58189"/>
        <dbReference type="ChEBI" id="CHEBI:58593"/>
        <dbReference type="ChEBI" id="CHEBI:61481"/>
    </reaction>
</comment>
<comment type="catalytic activity">
    <reaction evidence="1">
        <text>dGDP + ATP = dGTP + ADP</text>
        <dbReference type="Rhea" id="RHEA:27690"/>
        <dbReference type="ChEBI" id="CHEBI:30616"/>
        <dbReference type="ChEBI" id="CHEBI:58595"/>
        <dbReference type="ChEBI" id="CHEBI:61429"/>
        <dbReference type="ChEBI" id="CHEBI:456216"/>
        <dbReference type="EC" id="2.7.4.6"/>
    </reaction>
</comment>
<comment type="catalytic activity">
    <reaction evidence="1">
        <text>dADP + GTP = dATP + GDP</text>
        <dbReference type="Rhea" id="RHEA:79871"/>
        <dbReference type="ChEBI" id="CHEBI:37565"/>
        <dbReference type="ChEBI" id="CHEBI:57667"/>
        <dbReference type="ChEBI" id="CHEBI:58189"/>
        <dbReference type="ChEBI" id="CHEBI:61404"/>
    </reaction>
</comment>
<comment type="catalytic activity">
    <reaction evidence="2">
        <text>thiamine diphosphate + ADP = thiamine triphosphate + AMP</text>
        <dbReference type="Rhea" id="RHEA:69180"/>
        <dbReference type="ChEBI" id="CHEBI:58937"/>
        <dbReference type="ChEBI" id="CHEBI:58938"/>
        <dbReference type="ChEBI" id="CHEBI:456215"/>
        <dbReference type="ChEBI" id="CHEBI:456216"/>
    </reaction>
</comment>
<comment type="cofactor">
    <cofactor evidence="2">
        <name>Mg(2+)</name>
        <dbReference type="ChEBI" id="CHEBI:18420"/>
    </cofactor>
</comment>
<comment type="subunit">
    <text evidence="1 3">Monomer.</text>
</comment>
<comment type="subcellular location">
    <subcellularLocation>
        <location evidence="1 3">Cytoplasm</location>
    </subcellularLocation>
</comment>
<comment type="domain">
    <text evidence="1 3">Consists of three domains, a large central CORE domain and two small peripheral domains, NMPbind and LID, which undergo movements during catalysis. The LID domain closes over the site of phosphoryl transfer upon ATP binding. Assembling and dissambling the active center during each catalytic cycle provides an effective means to prevent ATP hydrolysis.</text>
</comment>
<comment type="similarity">
    <text evidence="3">Belongs to the adenylate kinase family. AK1 subfamily.</text>
</comment>
<name>KAD1_RAT</name>
<accession>P39069</accession>
<accession>Q5EBC5</accession>
<accession>Q9JJN3</accession>